<gene>
    <name evidence="1" type="primary">gltX</name>
    <name type="ordered locus">Nham_1709</name>
</gene>
<comment type="function">
    <text evidence="1">Catalyzes the attachment of glutamate to tRNA(Glu) in a two-step reaction: glutamate is first activated by ATP to form Glu-AMP and then transferred to the acceptor end of tRNA(Glu).</text>
</comment>
<comment type="catalytic activity">
    <reaction evidence="1">
        <text>tRNA(Glu) + L-glutamate + ATP = L-glutamyl-tRNA(Glu) + AMP + diphosphate</text>
        <dbReference type="Rhea" id="RHEA:23540"/>
        <dbReference type="Rhea" id="RHEA-COMP:9663"/>
        <dbReference type="Rhea" id="RHEA-COMP:9680"/>
        <dbReference type="ChEBI" id="CHEBI:29985"/>
        <dbReference type="ChEBI" id="CHEBI:30616"/>
        <dbReference type="ChEBI" id="CHEBI:33019"/>
        <dbReference type="ChEBI" id="CHEBI:78442"/>
        <dbReference type="ChEBI" id="CHEBI:78520"/>
        <dbReference type="ChEBI" id="CHEBI:456215"/>
        <dbReference type="EC" id="6.1.1.17"/>
    </reaction>
</comment>
<comment type="subunit">
    <text evidence="1">Monomer.</text>
</comment>
<comment type="subcellular location">
    <subcellularLocation>
        <location evidence="1">Cytoplasm</location>
    </subcellularLocation>
</comment>
<comment type="similarity">
    <text evidence="1">Belongs to the class-I aminoacyl-tRNA synthetase family. Glutamate--tRNA ligase type 1 subfamily.</text>
</comment>
<comment type="sequence caution" evidence="2">
    <conflict type="erroneous initiation">
        <sequence resource="EMBL-CDS" id="ABE62525"/>
    </conflict>
</comment>
<dbReference type="EC" id="6.1.1.17" evidence="1"/>
<dbReference type="EMBL" id="CP000319">
    <property type="protein sequence ID" value="ABE62525.1"/>
    <property type="status" value="ALT_INIT"/>
    <property type="molecule type" value="Genomic_DNA"/>
</dbReference>
<dbReference type="RefSeq" id="WP_041357859.1">
    <property type="nucleotide sequence ID" value="NC_007964.1"/>
</dbReference>
<dbReference type="SMR" id="Q1QMM2"/>
<dbReference type="STRING" id="323097.Nham_1709"/>
<dbReference type="KEGG" id="nha:Nham_1709"/>
<dbReference type="eggNOG" id="COG0008">
    <property type="taxonomic scope" value="Bacteria"/>
</dbReference>
<dbReference type="HOGENOM" id="CLU_015768_6_0_5"/>
<dbReference type="OrthoDB" id="9807503at2"/>
<dbReference type="Proteomes" id="UP000001953">
    <property type="component" value="Chromosome"/>
</dbReference>
<dbReference type="GO" id="GO:0005829">
    <property type="term" value="C:cytosol"/>
    <property type="evidence" value="ECO:0007669"/>
    <property type="project" value="TreeGrafter"/>
</dbReference>
<dbReference type="GO" id="GO:0005524">
    <property type="term" value="F:ATP binding"/>
    <property type="evidence" value="ECO:0007669"/>
    <property type="project" value="UniProtKB-UniRule"/>
</dbReference>
<dbReference type="GO" id="GO:0004818">
    <property type="term" value="F:glutamate-tRNA ligase activity"/>
    <property type="evidence" value="ECO:0007669"/>
    <property type="project" value="UniProtKB-UniRule"/>
</dbReference>
<dbReference type="GO" id="GO:0000049">
    <property type="term" value="F:tRNA binding"/>
    <property type="evidence" value="ECO:0007669"/>
    <property type="project" value="InterPro"/>
</dbReference>
<dbReference type="GO" id="GO:0008270">
    <property type="term" value="F:zinc ion binding"/>
    <property type="evidence" value="ECO:0007669"/>
    <property type="project" value="InterPro"/>
</dbReference>
<dbReference type="GO" id="GO:0006424">
    <property type="term" value="P:glutamyl-tRNA aminoacylation"/>
    <property type="evidence" value="ECO:0007669"/>
    <property type="project" value="UniProtKB-UniRule"/>
</dbReference>
<dbReference type="CDD" id="cd00808">
    <property type="entry name" value="GluRS_core"/>
    <property type="match status" value="1"/>
</dbReference>
<dbReference type="FunFam" id="3.40.50.620:FF:000007">
    <property type="entry name" value="Glutamate--tRNA ligase"/>
    <property type="match status" value="1"/>
</dbReference>
<dbReference type="Gene3D" id="1.10.10.350">
    <property type="match status" value="1"/>
</dbReference>
<dbReference type="Gene3D" id="3.40.50.620">
    <property type="entry name" value="HUPs"/>
    <property type="match status" value="1"/>
</dbReference>
<dbReference type="HAMAP" id="MF_00022">
    <property type="entry name" value="Glu_tRNA_synth_type1"/>
    <property type="match status" value="1"/>
</dbReference>
<dbReference type="InterPro" id="IPR045462">
    <property type="entry name" value="aa-tRNA-synth_I_cd-bd"/>
</dbReference>
<dbReference type="InterPro" id="IPR020751">
    <property type="entry name" value="aa-tRNA-synth_I_codon-bd_sub2"/>
</dbReference>
<dbReference type="InterPro" id="IPR001412">
    <property type="entry name" value="aa-tRNA-synth_I_CS"/>
</dbReference>
<dbReference type="InterPro" id="IPR008925">
    <property type="entry name" value="aa_tRNA-synth_I_cd-bd_sf"/>
</dbReference>
<dbReference type="InterPro" id="IPR004527">
    <property type="entry name" value="Glu-tRNA-ligase_bac/mito"/>
</dbReference>
<dbReference type="InterPro" id="IPR000924">
    <property type="entry name" value="Glu/Gln-tRNA-synth"/>
</dbReference>
<dbReference type="InterPro" id="IPR020058">
    <property type="entry name" value="Glu/Gln-tRNA-synth_Ib_cat-dom"/>
</dbReference>
<dbReference type="InterPro" id="IPR049940">
    <property type="entry name" value="GluQ/Sye"/>
</dbReference>
<dbReference type="InterPro" id="IPR033910">
    <property type="entry name" value="GluRS_core"/>
</dbReference>
<dbReference type="InterPro" id="IPR014729">
    <property type="entry name" value="Rossmann-like_a/b/a_fold"/>
</dbReference>
<dbReference type="NCBIfam" id="TIGR00464">
    <property type="entry name" value="gltX_bact"/>
    <property type="match status" value="1"/>
</dbReference>
<dbReference type="PANTHER" id="PTHR43311">
    <property type="entry name" value="GLUTAMATE--TRNA LIGASE"/>
    <property type="match status" value="1"/>
</dbReference>
<dbReference type="PANTHER" id="PTHR43311:SF2">
    <property type="entry name" value="GLUTAMATE--TRNA LIGASE, MITOCHONDRIAL-RELATED"/>
    <property type="match status" value="1"/>
</dbReference>
<dbReference type="Pfam" id="PF19269">
    <property type="entry name" value="Anticodon_2"/>
    <property type="match status" value="1"/>
</dbReference>
<dbReference type="Pfam" id="PF00749">
    <property type="entry name" value="tRNA-synt_1c"/>
    <property type="match status" value="1"/>
</dbReference>
<dbReference type="PRINTS" id="PR00987">
    <property type="entry name" value="TRNASYNTHGLU"/>
</dbReference>
<dbReference type="SUPFAM" id="SSF48163">
    <property type="entry name" value="An anticodon-binding domain of class I aminoacyl-tRNA synthetases"/>
    <property type="match status" value="1"/>
</dbReference>
<dbReference type="SUPFAM" id="SSF52374">
    <property type="entry name" value="Nucleotidylyl transferase"/>
    <property type="match status" value="1"/>
</dbReference>
<dbReference type="PROSITE" id="PS00178">
    <property type="entry name" value="AA_TRNA_LIGASE_I"/>
    <property type="match status" value="1"/>
</dbReference>
<organism>
    <name type="scientific">Nitrobacter hamburgensis (strain DSM 10229 / NCIMB 13809 / X14)</name>
    <dbReference type="NCBI Taxonomy" id="323097"/>
    <lineage>
        <taxon>Bacteria</taxon>
        <taxon>Pseudomonadati</taxon>
        <taxon>Pseudomonadota</taxon>
        <taxon>Alphaproteobacteria</taxon>
        <taxon>Hyphomicrobiales</taxon>
        <taxon>Nitrobacteraceae</taxon>
        <taxon>Nitrobacter</taxon>
    </lineage>
</organism>
<reference key="1">
    <citation type="submission" date="2006-03" db="EMBL/GenBank/DDBJ databases">
        <title>Complete sequence of chromosome of Nitrobacter hamburgensis X14.</title>
        <authorList>
            <consortium name="US DOE Joint Genome Institute"/>
            <person name="Copeland A."/>
            <person name="Lucas S."/>
            <person name="Lapidus A."/>
            <person name="Barry K."/>
            <person name="Detter J.C."/>
            <person name="Glavina del Rio T."/>
            <person name="Hammon N."/>
            <person name="Israni S."/>
            <person name="Dalin E."/>
            <person name="Tice H."/>
            <person name="Pitluck S."/>
            <person name="Chain P."/>
            <person name="Malfatti S."/>
            <person name="Shin M."/>
            <person name="Vergez L."/>
            <person name="Schmutz J."/>
            <person name="Larimer F."/>
            <person name="Land M."/>
            <person name="Hauser L."/>
            <person name="Kyrpides N."/>
            <person name="Ivanova N."/>
            <person name="Ward B."/>
            <person name="Arp D."/>
            <person name="Klotz M."/>
            <person name="Stein L."/>
            <person name="O'Mullan G."/>
            <person name="Starkenburg S."/>
            <person name="Sayavedra L."/>
            <person name="Poret-Peterson A.T."/>
            <person name="Gentry M.E."/>
            <person name="Bruce D."/>
            <person name="Richardson P."/>
        </authorList>
    </citation>
    <scope>NUCLEOTIDE SEQUENCE [LARGE SCALE GENOMIC DNA]</scope>
    <source>
        <strain>DSM 10229 / NCIMB 13809 / X14</strain>
    </source>
</reference>
<name>SYE_NITHX</name>
<evidence type="ECO:0000255" key="1">
    <source>
        <dbReference type="HAMAP-Rule" id="MF_00022"/>
    </source>
</evidence>
<evidence type="ECO:0000305" key="2"/>
<proteinExistence type="inferred from homology"/>
<feature type="chain" id="PRO_0000330985" description="Glutamate--tRNA ligase">
    <location>
        <begin position="1"/>
        <end position="474"/>
    </location>
</feature>
<feature type="short sequence motif" description="'HIGH' region" evidence="1">
    <location>
        <begin position="11"/>
        <end position="21"/>
    </location>
</feature>
<feature type="short sequence motif" description="'KMSKS' region" evidence="1">
    <location>
        <begin position="240"/>
        <end position="244"/>
    </location>
</feature>
<feature type="binding site" evidence="1">
    <location>
        <position position="243"/>
    </location>
    <ligand>
        <name>ATP</name>
        <dbReference type="ChEBI" id="CHEBI:30616"/>
    </ligand>
</feature>
<accession>Q1QMM2</accession>
<sequence>MIASVVTRFAPSPTGFLHIGGARTALFNWLYARKHGGKMLLRIEDTDRARSTTAAIEAILDGLKWLGIDWDDDVVYQFSRVARHRDIAEQLLAEGKAYRCYATPEELAEMREKARAEGRAKLYDGRWRDRDPSEAPPDLKPTIRLKAPLSGETVIEDQVQGRVVWQNENLDDLVLLRGDGTPTYMLAVVVDDHDMGVTHIIRGDDHLINAARQKQIYDTLGWALPTMAHIPLIHGPDGSKLSKRHGALGVDAYRAMGYLPAALRNYLVRLGWSHGDQEIFSTQEMIDAFDLSAIGRSAARFDFAKLENLNGHYIRNCDDHVLVDLFQDALDYVPRGADLKPKLNDATRAQLLRAMPGLKERAKTLIELIDSARFIFADRPLTLDAKAIPLLTSETRALIGRLRTTLETVTSWSAQTTEAAMRTFAEQNNLKLGAIAQPLRIALTGRTTSPGIFDVLAVLGKETCLARLDDQSSP</sequence>
<keyword id="KW-0030">Aminoacyl-tRNA synthetase</keyword>
<keyword id="KW-0067">ATP-binding</keyword>
<keyword id="KW-0963">Cytoplasm</keyword>
<keyword id="KW-0436">Ligase</keyword>
<keyword id="KW-0547">Nucleotide-binding</keyword>
<keyword id="KW-0648">Protein biosynthesis</keyword>
<keyword id="KW-1185">Reference proteome</keyword>
<protein>
    <recommendedName>
        <fullName evidence="1">Glutamate--tRNA ligase</fullName>
        <ecNumber evidence="1">6.1.1.17</ecNumber>
    </recommendedName>
    <alternativeName>
        <fullName evidence="1">Glutamyl-tRNA synthetase</fullName>
        <shortName evidence="1">GluRS</shortName>
    </alternativeName>
</protein>